<keyword id="KW-0963">Cytoplasm</keyword>
<keyword id="KW-0690">Ribosome biogenesis</keyword>
<name>RBFA_CLOB8</name>
<organism>
    <name type="scientific">Clostridium beijerinckii (strain ATCC 51743 / NCIMB 8052)</name>
    <name type="common">Clostridium acetobutylicum</name>
    <dbReference type="NCBI Taxonomy" id="290402"/>
    <lineage>
        <taxon>Bacteria</taxon>
        <taxon>Bacillati</taxon>
        <taxon>Bacillota</taxon>
        <taxon>Clostridia</taxon>
        <taxon>Eubacteriales</taxon>
        <taxon>Clostridiaceae</taxon>
        <taxon>Clostridium</taxon>
    </lineage>
</organism>
<reference key="1">
    <citation type="submission" date="2007-06" db="EMBL/GenBank/DDBJ databases">
        <title>Complete sequence of Clostridium beijerinckii NCIMB 8052.</title>
        <authorList>
            <consortium name="US DOE Joint Genome Institute"/>
            <person name="Copeland A."/>
            <person name="Lucas S."/>
            <person name="Lapidus A."/>
            <person name="Barry K."/>
            <person name="Detter J.C."/>
            <person name="Glavina del Rio T."/>
            <person name="Hammon N."/>
            <person name="Israni S."/>
            <person name="Dalin E."/>
            <person name="Tice H."/>
            <person name="Pitluck S."/>
            <person name="Sims D."/>
            <person name="Brettin T."/>
            <person name="Bruce D."/>
            <person name="Tapia R."/>
            <person name="Brainard J."/>
            <person name="Schmutz J."/>
            <person name="Larimer F."/>
            <person name="Land M."/>
            <person name="Hauser L."/>
            <person name="Kyrpides N."/>
            <person name="Mikhailova N."/>
            <person name="Bennet G."/>
            <person name="Cann I."/>
            <person name="Chen J.-S."/>
            <person name="Contreras A.L."/>
            <person name="Jones D."/>
            <person name="Kashket E."/>
            <person name="Mitchell W."/>
            <person name="Stoddard S."/>
            <person name="Schwarz W."/>
            <person name="Qureshi N."/>
            <person name="Young M."/>
            <person name="Shi Z."/>
            <person name="Ezeji T."/>
            <person name="White B."/>
            <person name="Blaschek H."/>
            <person name="Richardson P."/>
        </authorList>
    </citation>
    <scope>NUCLEOTIDE SEQUENCE [LARGE SCALE GENOMIC DNA]</scope>
    <source>
        <strain>ATCC 51743 / NCIMB 8052</strain>
    </source>
</reference>
<accession>A6LSQ5</accession>
<protein>
    <recommendedName>
        <fullName evidence="1">Ribosome-binding factor A</fullName>
    </recommendedName>
</protein>
<gene>
    <name evidence="1" type="primary">rbfA</name>
    <name type="ordered locus">Cbei_1203</name>
</gene>
<evidence type="ECO:0000255" key="1">
    <source>
        <dbReference type="HAMAP-Rule" id="MF_00003"/>
    </source>
</evidence>
<sequence length="118" mass="13629">MANYRGGRINEEFKREISNLIQNEVKDPRLTAMISVTDVKVTKDLRYAKVYVSIFSKDDEEKKNNLEALKNASGFIRKSVGQKINLRHTPEIIIELDDSINYGMHMDELIQRISKGNE</sequence>
<dbReference type="EMBL" id="CP000721">
    <property type="protein sequence ID" value="ABR33385.1"/>
    <property type="molecule type" value="Genomic_DNA"/>
</dbReference>
<dbReference type="RefSeq" id="WP_011968540.1">
    <property type="nucleotide sequence ID" value="NC_009617.1"/>
</dbReference>
<dbReference type="SMR" id="A6LSQ5"/>
<dbReference type="GeneID" id="66344193"/>
<dbReference type="KEGG" id="cbe:Cbei_1203"/>
<dbReference type="eggNOG" id="COG0858">
    <property type="taxonomic scope" value="Bacteria"/>
</dbReference>
<dbReference type="HOGENOM" id="CLU_089475_6_3_9"/>
<dbReference type="Proteomes" id="UP000000565">
    <property type="component" value="Chromosome"/>
</dbReference>
<dbReference type="GO" id="GO:0005829">
    <property type="term" value="C:cytosol"/>
    <property type="evidence" value="ECO:0007669"/>
    <property type="project" value="TreeGrafter"/>
</dbReference>
<dbReference type="GO" id="GO:0043024">
    <property type="term" value="F:ribosomal small subunit binding"/>
    <property type="evidence" value="ECO:0007669"/>
    <property type="project" value="TreeGrafter"/>
</dbReference>
<dbReference type="GO" id="GO:0030490">
    <property type="term" value="P:maturation of SSU-rRNA"/>
    <property type="evidence" value="ECO:0007669"/>
    <property type="project" value="UniProtKB-UniRule"/>
</dbReference>
<dbReference type="Gene3D" id="3.30.300.20">
    <property type="match status" value="1"/>
</dbReference>
<dbReference type="HAMAP" id="MF_00003">
    <property type="entry name" value="RbfA"/>
    <property type="match status" value="1"/>
</dbReference>
<dbReference type="InterPro" id="IPR015946">
    <property type="entry name" value="KH_dom-like_a/b"/>
</dbReference>
<dbReference type="InterPro" id="IPR000238">
    <property type="entry name" value="RbfA"/>
</dbReference>
<dbReference type="InterPro" id="IPR023799">
    <property type="entry name" value="RbfA_dom_sf"/>
</dbReference>
<dbReference type="InterPro" id="IPR020053">
    <property type="entry name" value="Ribosome-bd_factorA_CS"/>
</dbReference>
<dbReference type="NCBIfam" id="TIGR00082">
    <property type="entry name" value="rbfA"/>
    <property type="match status" value="1"/>
</dbReference>
<dbReference type="PANTHER" id="PTHR33515">
    <property type="entry name" value="RIBOSOME-BINDING FACTOR A, CHLOROPLASTIC-RELATED"/>
    <property type="match status" value="1"/>
</dbReference>
<dbReference type="PANTHER" id="PTHR33515:SF1">
    <property type="entry name" value="RIBOSOME-BINDING FACTOR A, CHLOROPLASTIC-RELATED"/>
    <property type="match status" value="1"/>
</dbReference>
<dbReference type="Pfam" id="PF02033">
    <property type="entry name" value="RBFA"/>
    <property type="match status" value="1"/>
</dbReference>
<dbReference type="SUPFAM" id="SSF89919">
    <property type="entry name" value="Ribosome-binding factor A, RbfA"/>
    <property type="match status" value="1"/>
</dbReference>
<dbReference type="PROSITE" id="PS01319">
    <property type="entry name" value="RBFA"/>
    <property type="match status" value="1"/>
</dbReference>
<proteinExistence type="inferred from homology"/>
<comment type="function">
    <text evidence="1">One of several proteins that assist in the late maturation steps of the functional core of the 30S ribosomal subunit. Associates with free 30S ribosomal subunits (but not with 30S subunits that are part of 70S ribosomes or polysomes). Required for efficient processing of 16S rRNA. May interact with the 5'-terminal helix region of 16S rRNA.</text>
</comment>
<comment type="subunit">
    <text evidence="1">Monomer. Binds 30S ribosomal subunits, but not 50S ribosomal subunits or 70S ribosomes.</text>
</comment>
<comment type="subcellular location">
    <subcellularLocation>
        <location evidence="1">Cytoplasm</location>
    </subcellularLocation>
</comment>
<comment type="similarity">
    <text evidence="1">Belongs to the RbfA family.</text>
</comment>
<feature type="chain" id="PRO_1000073755" description="Ribosome-binding factor A">
    <location>
        <begin position="1"/>
        <end position="118"/>
    </location>
</feature>